<organismHost>
    <name type="scientific">Homo sapiens</name>
    <name type="common">Human</name>
    <dbReference type="NCBI Taxonomy" id="9606"/>
</organismHost>
<comment type="function">
    <text evidence="1">Gag-Pol polyprotein and Gag polyprotein may regulate their own translation, by the binding genomic RNA in the 5'-UTR. At low concentration, Gag-Pol and Gag would promote translation, whereas at high concentration, the polyproteins encapsidate genomic RNA and then shut off translation (By similarity).</text>
</comment>
<comment type="function">
    <text evidence="1 7">Matrix protein p17 targets Gag and Gag-pol polyproteins to the plasma membrane via a multipartite membrane-binding signal, that includes its myristoylated N-terminus (By similarity). Matrix protein is part of the pre-integration complex. Implicated in the release from host cell mediated by Vpu. Binds to RNA (By similarity).</text>
</comment>
<comment type="function">
    <molecule>Capsid protein p24</molecule>
    <text evidence="5 7">Forms the conical core that encapsulates the genomic RNA-nucleocapsid complex in the virion. Most core are conical, with only 7% tubular. The core is constituted by capsid protein hexamer subunits. The core is disassembled soon after virion entry (By similarity). Host restriction factors such as TRIM5-alpha or TRIMCyp bind retroviral capsids and cause premature capsid disassembly, leading to blocks in reverse transcription. Capsid restriction by TRIM5 is one of the factors which restricts HIV-1 to the human species. Host PIN1 apparently facilitates the virion uncoating. On the other hand, interactions with PDZD8 or CYPA stabilize the capsid.</text>
</comment>
<comment type="function">
    <text evidence="5">Nucleocapsid protein p7 encapsulates and protects viral dimeric unspliced genomic RNA (gRNA). Binds these RNAs through its zinc fingers. Acts as a nucleic acid chaperone which is involved in rearangement of nucleic acid secondary structure during gRNA retrotranscription. Also facilitates template switch leading to recombination. As part of the polyprotein, participates in gRNA dimerization, packaging, tRNA incorporation and virion assembly.</text>
</comment>
<comment type="function">
    <text evidence="10">The aspartyl protease mediates proteolytic cleavages of Gag and Gag-Pol polyproteins during or shortly after the release of the virion from the plasma membrane. Cleavages take place as an ordered, step-wise cascade to yield mature proteins. This process is called maturation. Displays maximal activity during the budding process just prior to particle release from the cell. Also cleaves Nef and Vif, probably concomitantly with viral structural proteins on maturation of virus particles. Hydrolyzes host EIF4GI and PABP1 in order to shut off the capped cellular mRNA translation. The resulting inhibition of cellular protein synthesis serves to ensure maximal viral gene expression and to evade host immune response. Also mediates cleavage of host YTHDF3. Mediates cleavage of host CARD8, thereby activating the CARD8 inflammasome, leading to the clearance of latent HIV-1 in patient CD4(+) T-cells after viral reactivation; in contrast, HIV-1 can evade CARD8-sensing when its protease remains inactive in infected cells prior to viral budding (By similarity).</text>
</comment>
<comment type="function">
    <text evidence="1">Reverse transcriptase/ribonuclease H (RT) is a multifunctional enzyme that converts the viral RNA genome into dsDNA in the cytoplasm, shortly after virus entry into the cell. This enzyme displays a DNA polymerase activity that can copy either DNA or RNA templates, and a ribonuclease H (RNase H) activity that cleaves the RNA strand of RNA-DNA heteroduplexes in a partially processive 3' to 5' endonucleasic mode. Conversion of viral genomic RNA into dsDNA requires many steps. A tRNA(3)-Lys binds to the primer-binding site (PBS) situated at the 5'-end of the viral RNA. RT uses the 3' end of the tRNA primer to perform a short round of RNA-dependent minus-strand DNA synthesis. The reading proceeds through the U5 region and ends after the repeated (R) region which is present at both ends of viral RNA. The portion of the RNA-DNA heteroduplex is digested by the RNase H, resulting in a ssDNA product attached to the tRNA primer. This ssDNA/tRNA hybridizes with the identical R region situated at the 3' end of viral RNA. This template exchange, known as minus-strand DNA strong stop transfer, can be either intra- or intermolecular. RT uses the 3' end of this newly synthesized short ssDNA to perform the RNA-dependent minus-strand DNA synthesis of the whole template. RNase H digests the RNA template except for two polypurine tracts (PPTs) situated at the 5'-end and near the center of the genome. It is not clear if both polymerase and RNase H activities are simultaneous. RNase H probably can proceed both in a polymerase-dependent (RNA cut into small fragments by the same RT performing DNA synthesis) and a polymerase-independent mode (cleavage of remaining RNA fragments by free RTs). Secondly, RT performs DNA-directed plus-strand DNA synthesis using the PPTs that have not been removed by RNase H as primers. PPTs and tRNA primers are then removed by RNase H. The 3' and 5' ssDNA PBS regions hybridize to form a circular dsDNA intermediate. Strand displacement synthesis by RT to the PBS and PPT ends produces a blunt ended, linear dsDNA copy of the viral genome that includes long terminal repeats (LTRs) at both ends (By similarity).</text>
</comment>
<comment type="function">
    <molecule>Integrase</molecule>
    <text evidence="5">Catalyzes viral DNA integration into the host chromosome, by performing a series of DNA cutting and joining reactions. This enzyme activity takes place after virion entry into a cell and reverse transcription of the RNA genome in dsDNA. The first step in the integration process is 3' processing. This step requires a complex comprising the viral genome, matrix protein, Vpr and integrase. This complex is called the pre-integration complex (PIC). The integrase protein removes 2 nucleotides from each 3' end of the viral DNA, leaving recessed CA OH's at the 3' ends. In the second step, the PIC enters cell nucleus. This process is mediated through integrase and Vpr proteins, and allows the virus to infect a non dividing cell. This ability to enter the nucleus is specific of lentiviruses, other retroviruses cannot and rely on cell division to access cell chromosomes. In the third step, termed strand transfer, the integrase protein joins the previously processed 3' ends to the 5' ends of strands of target cellular DNA at the site of integration. The 5'-ends are produced by integrase-catalyzed staggered cuts, 5 bp apart. A Y-shaped, gapped, recombination intermediate results, with the 5'-ends of the viral DNA strands and the 3' ends of target DNA strands remaining unjoined, flanking a gap of 5 bp. The last step is viral DNA integration into host chromosome. This involves host DNA repair synthesis in which the 5 bp gaps between the unjoined strands are filled in and then ligated. Since this process occurs at both cuts flanking the HIV genome, a 5 bp duplication of host DNA is produced at the ends of HIV-1 integration. Alternatively, Integrase may catalyze the excision of viral DNA just after strand transfer, this is termed disintegration.</text>
</comment>
<comment type="catalytic activity">
    <reaction evidence="10">
        <text>Specific for a P1 residue that is hydrophobic, and P1' variable, but often Pro.</text>
        <dbReference type="EC" id="3.4.23.16"/>
    </reaction>
</comment>
<comment type="catalytic activity">
    <reaction>
        <text>Endohydrolysis of RNA in RNA/DNA hybrids. Three different cleavage modes: 1. sequence-specific internal cleavage of RNA. Human immunodeficiency virus type 1 and Moloney murine leukemia virus enzymes prefer to cleave the RNA strand one nucleotide away from the RNA-DNA junction. 2. RNA 5'-end directed cleavage 13-19 nucleotides from the RNA end. 3. DNA 3'-end directed cleavage 15-20 nucleotides away from the primer terminus.</text>
        <dbReference type="EC" id="3.1.26.13"/>
    </reaction>
</comment>
<comment type="catalytic activity">
    <reaction>
        <text>3'-end directed exonucleolytic cleavage of viral RNA-DNA hybrid.</text>
        <dbReference type="EC" id="3.1.13.2"/>
    </reaction>
</comment>
<comment type="catalytic activity">
    <reaction evidence="11">
        <text>DNA(n) + a 2'-deoxyribonucleoside 5'-triphosphate = DNA(n+1) + diphosphate</text>
        <dbReference type="Rhea" id="RHEA:22508"/>
        <dbReference type="Rhea" id="RHEA-COMP:17339"/>
        <dbReference type="Rhea" id="RHEA-COMP:17340"/>
        <dbReference type="ChEBI" id="CHEBI:33019"/>
        <dbReference type="ChEBI" id="CHEBI:61560"/>
        <dbReference type="ChEBI" id="CHEBI:173112"/>
        <dbReference type="EC" id="2.7.7.49"/>
    </reaction>
</comment>
<comment type="catalytic activity">
    <reaction evidence="11">
        <text>DNA(n) + a 2'-deoxyribonucleoside 5'-triphosphate = DNA(n+1) + diphosphate</text>
        <dbReference type="Rhea" id="RHEA:22508"/>
        <dbReference type="Rhea" id="RHEA-COMP:17339"/>
        <dbReference type="Rhea" id="RHEA-COMP:17340"/>
        <dbReference type="ChEBI" id="CHEBI:33019"/>
        <dbReference type="ChEBI" id="CHEBI:61560"/>
        <dbReference type="ChEBI" id="CHEBI:173112"/>
        <dbReference type="EC" id="2.7.7.7"/>
    </reaction>
</comment>
<comment type="cofactor">
    <cofactor evidence="1">
        <name>Mg(2+)</name>
        <dbReference type="ChEBI" id="CHEBI:18420"/>
    </cofactor>
    <text evidence="1">Binds 2 magnesium ions for reverse transcriptase polymerase activity.</text>
</comment>
<comment type="cofactor">
    <cofactor evidence="1">
        <name>Mg(2+)</name>
        <dbReference type="ChEBI" id="CHEBI:18420"/>
    </cofactor>
    <text evidence="1">Binds 2 magnesium ions for ribonuclease H (RNase H) activity. Substrate-binding is a precondition for magnesium binding.</text>
</comment>
<comment type="cofactor">
    <cofactor evidence="1">
        <name>Mg(2+)</name>
        <dbReference type="ChEBI" id="CHEBI:18420"/>
    </cofactor>
    <text evidence="1">Magnesium ions are required for integrase activity. Binds at least 1, maybe 2 magnesium ions.</text>
</comment>
<comment type="activity regulation">
    <text evidence="1">The viral protease is inhibited by many synthetic protease inhibitors (PIs), such as amprenavir, atazanavir, indinavir, loprinavir, nelfinavir, ritonavir and saquinavir. RT can be inhibited either by nucleoside RT inhibitors (NRTIs) or by non nucleoside RT inhibitors (NNRTIs). NRTIs act as chain terminators, whereas NNRTIs inhibit DNA polymerization by binding a small hydrophobic pocket near the RT active site and inducing an allosteric change in this region. Classical NRTIs are abacavir, adefovir (PMEA), didanosine (ddI), lamivudine (3TC), stavudine (d4T), tenofovir (PMPA), zalcitabine (ddC), and zidovudine (AZT). Classical NNRTIs are atevirdine (BHAP U-87201E), delavirdine, efavirenz (DMP-266), emivirine (I-EBU), and nevirapine (BI-RG-587). The tritherapies used as a basic effective treatment of AIDS associate two NRTIs and one NNRTI. Use of protease inhibitors in tritherapy regimens permit more ambitious therapeutic strategies (By similarity).</text>
</comment>
<comment type="subunit">
    <molecule>Matrix protein p17</molecule>
    <text evidence="5 7">Homotrimer; further assembles as hexamers of trimers (By similarity). Interacts with gp41 (via C-terminus) (By similarity). Interacts with host CALM1; this interaction induces a conformational change in the Matrix protein, triggering exposure of the myristate group (By similarity). Interacts with host AP3D1; this interaction allows the polyprotein trafficking to multivesicular bodies during virus assembly (By similarity). Part of the pre-integration complex (PIC) which is composed of viral genome, matrix protein, Vpr and integrase (By similarity).</text>
</comment>
<comment type="subunit">
    <molecule>Capsid protein p24</molecule>
    <text evidence="5 7">Homodimer; the homodimer further multimerizes as homohexamers or homopentamers. Interacts with human PPIA/CYPA (By similarity); This interaction stabilizes the capsid. Interacts with human NUP153 (By similarity). Interacts with host PDZD8; this interaction stabilizes the capsid (By similarity). Interacts with monkey TRIM5; this interaction destabilizes the capsid (By similarity).</text>
</comment>
<comment type="subunit">
    <molecule>Protease</molecule>
    <text evidence="5 7">Homodimer, whose active site consists of two apposed aspartic acid residues.</text>
</comment>
<comment type="subunit">
    <molecule>Reverse transcriptase/ribonuclease H</molecule>
    <text evidence="3">Heterodimer of p66 RT and p51 RT (RT p66/p51) (By similarity). Heterodimerization of RT is essential for DNA polymerase activity (By similarity). The overall folding of the subdomains is similar in p66 RT and p51 RT but the spatial arrangements of the subdomains are dramatically different (By similarity).</text>
</comment>
<comment type="subunit">
    <molecule>Integrase</molecule>
    <text evidence="4 5 7">Homotetramer; may further associate as a homohexadecamer (By similarity). Part of the pre-integration complex (PIC) which is composed of viral genome, matrix protein, Vpr and integrase. Interacts with human SMARCB1/INI1 and human PSIP1/LEDGF isoform 1. Interacts with human KPNA3; this interaction might play a role in nuclear import of the pre-integration complex (By similarity). Interacts with human NUP153; this interaction might play a role in nuclear import of the pre-integration complex (By similarity).</text>
</comment>
<comment type="subcellular location">
    <molecule>Gag-Pol polyprotein</molecule>
    <subcellularLocation>
        <location evidence="6">Host cell membrane</location>
        <topology>Lipid-anchor</topology>
    </subcellularLocation>
    <subcellularLocation>
        <location evidence="6">Host endosome</location>
        <location evidence="6">Host multivesicular body</location>
    </subcellularLocation>
    <text evidence="6">These locations are linked to virus assembly sites. The main location is the cell membrane, but under some circumstances, late endosomal compartments can serve as productive sites for virion assembly.</text>
</comment>
<comment type="subcellular location">
    <molecule>Matrix protein p17</molecule>
    <subcellularLocation>
        <location>Virion membrane</location>
        <topology evidence="18">Lipid-anchor</topology>
    </subcellularLocation>
    <subcellularLocation>
        <location evidence="1">Host nucleus</location>
    </subcellularLocation>
    <subcellularLocation>
        <location evidence="1">Host cytoplasm</location>
    </subcellularLocation>
</comment>
<comment type="subcellular location">
    <molecule>Capsid protein p24</molecule>
    <subcellularLocation>
        <location evidence="18">Virion</location>
    </subcellularLocation>
</comment>
<comment type="subcellular location">
    <molecule>Nucleocapsid protein p7</molecule>
    <subcellularLocation>
        <location evidence="18">Virion</location>
    </subcellularLocation>
</comment>
<comment type="subcellular location">
    <molecule>Reverse transcriptase/ribonuclease H</molecule>
    <subcellularLocation>
        <location evidence="18">Virion</location>
    </subcellularLocation>
</comment>
<comment type="subcellular location">
    <molecule>Integrase</molecule>
    <subcellularLocation>
        <location evidence="18">Virion</location>
    </subcellularLocation>
    <subcellularLocation>
        <location evidence="18">Host nucleus</location>
    </subcellularLocation>
    <subcellularLocation>
        <location evidence="18">Host cytoplasm</location>
    </subcellularLocation>
    <text evidence="18">Nuclear at initial phase, cytoplasmic at assembly.</text>
</comment>
<comment type="alternative products">
    <event type="ribosomal frameshifting"/>
    <isoform>
        <id>P18802-1</id>
        <name>Gag-Pol polyprotein</name>
        <sequence type="displayed"/>
    </isoform>
    <isoform>
        <id>P18800-1</id>
        <name>Gag polyprotein</name>
        <sequence type="external"/>
    </isoform>
    <text>Translation results in the formation of the Gag polyprotein most of the time. Ribosomal frameshifting at the gag-pol genes boundary occurs at low frequency and produces the Gag-Pol polyprotein. This strategy of translation probably allows the virus to modulate the quantity of each viral protein. Maintenance of a correct Gag to Gag-Pol ratio is essential for RNA dimerization and viral infectivity.</text>
</comment>
<comment type="domain">
    <molecule>Reverse transcriptase/ribonuclease H</molecule>
    <text evidence="1">RT is structured in five subdomains: finger, palm, thumb, connection and RNase H. Within the palm subdomain, the 'primer grip' region is thought to be involved in the positioning of the primer terminus for accommodating the incoming nucleotide. The RNase H domain stabilizes the association of RT with primer-template.</text>
</comment>
<comment type="domain">
    <molecule>Reverse transcriptase/ribonuclease H</molecule>
    <text evidence="1">The tryptophan repeat motif is involved in RT p66/p51 dimerization (By similarity).</text>
</comment>
<comment type="domain">
    <molecule>Integrase</molecule>
    <text evidence="1">The core domain contains the D-x(n)-D-x(35)-E motif, named for the phylogenetically conserved glutamic acid and aspartic acid residues and the invariant 35 amino acid spacing between the second and third acidic residues. Each acidic residue of the D,D(35)E motif is independently essential for the 3'-processing and strand transfer activities of purified integrase protein.</text>
</comment>
<comment type="PTM">
    <molecule>Gag-Pol polyprotein</molecule>
    <text evidence="5 11">Specific enzymatic cleavages by the viral protease yield mature proteins. The protease is released by autocatalytic cleavage. The polyprotein is cleaved during and after budding, this process is termed maturation. Proteolytic cleavage of p66 RT removes the RNase H domain to yield the p51 RT subunit. Nucleocapsid protein p7 might be further cleaved after virus entry.</text>
</comment>
<comment type="PTM">
    <molecule>Matrix protein p17</molecule>
    <text evidence="5">Tyrosine phosphorylated presumably in the virion by a host kinase. Phosphorylation is apparently not a major regulator of membrane association.</text>
</comment>
<comment type="PTM">
    <molecule>Capsid protein p24</molecule>
    <text evidence="6">Phosphorylated possibly by host MAPK1; this phosphorylation is necessary for Pin1-mediated virion uncoating.</text>
</comment>
<comment type="PTM">
    <molecule>Nucleocapsid protein p7</molecule>
    <text evidence="2">Methylated by host PRMT6, impairing its function by reducing RNA annealing and the initiation of reverse transcription.</text>
</comment>
<comment type="miscellaneous">
    <molecule>Reverse transcriptase/ribonuclease H</molecule>
    <text evidence="1">Error-prone enzyme that lacks a proof-reading function. High mutations rate is a direct consequence of this characteristic. RT also displays frequent template switching leading to high recombination rate. Recombination mostly occurs between homologous regions of the two copackaged RNA genomes. If these two RNA molecules derive from different viral strains, reverse transcription will give rise to highly recombinated proviral DNAs.</text>
</comment>
<comment type="miscellaneous">
    <text>HIV-1 lineages are divided in three main groups, M (for Major), O (for Outlier), and N (for New, or Non-M, Non-O). The vast majority of strains found worldwide belong to the group M. Group O seems to be endemic to and largely confined to Cameroon and neighboring countries in West Central Africa, where these viruses represent a small minority of HIV-1 strains. The group N is represented by a limited number of isolates from Cameroonian persons. The group M is further subdivided in 9 clades or subtypes (A to D, F to H, J and K).</text>
</comment>
<comment type="miscellaneous">
    <text>Resistance to inhibitors associated with mutations are observed both in viral protease and in reverse transcriptase. Most of the time, single mutations confer only a modest reduction in drug susceptibility. Combination of several mutations is usually required to develop a high-level drug resistance. These mutations are predominantly found in clade B viruses and not in other genotypes. They are listed in the clade B representative isolate HXB2 (AC P04585).</text>
</comment>
<comment type="miscellaneous">
    <molecule>Isoform Gag-Pol polyprotein</molecule>
    <text>Produced by -1 ribosomal frameshifting.</text>
</comment>
<comment type="online information" name="HIV drug resistance mutations">
    <link uri="https://www.iasusa.org/hiv-drug-resistance/hiv-drug-resistance-mutations/"/>
</comment>
<comment type="online information" name="hivdb">
    <link uri="https://hivdb.stanford.edu"/>
    <text>HIV drug resistance database</text>
</comment>
<evidence type="ECO:0000250" key="1"/>
<evidence type="ECO:0000250" key="2">
    <source>
        <dbReference type="UniProtKB" id="P03347"/>
    </source>
</evidence>
<evidence type="ECO:0000250" key="3">
    <source>
        <dbReference type="UniProtKB" id="P03366"/>
    </source>
</evidence>
<evidence type="ECO:0000250" key="4">
    <source>
        <dbReference type="UniProtKB" id="P03367"/>
    </source>
</evidence>
<evidence type="ECO:0000250" key="5">
    <source>
        <dbReference type="UniProtKB" id="P04585"/>
    </source>
</evidence>
<evidence type="ECO:0000250" key="6">
    <source>
        <dbReference type="UniProtKB" id="P12493"/>
    </source>
</evidence>
<evidence type="ECO:0000250" key="7">
    <source>
        <dbReference type="UniProtKB" id="P12497"/>
    </source>
</evidence>
<evidence type="ECO:0000255" key="8"/>
<evidence type="ECO:0000255" key="9">
    <source>
        <dbReference type="PROSITE-ProRule" id="PRU00047"/>
    </source>
</evidence>
<evidence type="ECO:0000255" key="10">
    <source>
        <dbReference type="PROSITE-ProRule" id="PRU00275"/>
    </source>
</evidence>
<evidence type="ECO:0000255" key="11">
    <source>
        <dbReference type="PROSITE-ProRule" id="PRU00405"/>
    </source>
</evidence>
<evidence type="ECO:0000255" key="12">
    <source>
        <dbReference type="PROSITE-ProRule" id="PRU00408"/>
    </source>
</evidence>
<evidence type="ECO:0000255" key="13">
    <source>
        <dbReference type="PROSITE-ProRule" id="PRU00450"/>
    </source>
</evidence>
<evidence type="ECO:0000255" key="14">
    <source>
        <dbReference type="PROSITE-ProRule" id="PRU00457"/>
    </source>
</evidence>
<evidence type="ECO:0000255" key="15">
    <source>
        <dbReference type="PROSITE-ProRule" id="PRU00506"/>
    </source>
</evidence>
<evidence type="ECO:0000255" key="16">
    <source>
        <dbReference type="PROSITE-ProRule" id="PRU10094"/>
    </source>
</evidence>
<evidence type="ECO:0000256" key="17">
    <source>
        <dbReference type="SAM" id="MobiDB-lite"/>
    </source>
</evidence>
<evidence type="ECO:0000305" key="18"/>
<reference key="1">
    <citation type="journal article" date="1989" name="Gene">
        <title>Nucleotide sequence of HIV1-NDK: a highly cytopathic strain of the human immunodeficiency virus.</title>
        <authorList>
            <person name="Spire B."/>
            <person name="Sire J."/>
            <person name="Zachar V."/>
            <person name="Rey F."/>
            <person name="Barre-Sinoussi F."/>
            <person name="Galibert F."/>
            <person name="Hampe A."/>
            <person name="Chermann J.C."/>
        </authorList>
    </citation>
    <scope>NUCLEOTIDE SEQUENCE [GENOMIC DNA]</scope>
</reference>
<reference key="2">
    <citation type="journal article" date="1996" name="Curr. Top. Microbiol. Immunol.">
        <title>Proteolytic processing and particle maturation.</title>
        <authorList>
            <person name="Vogt V.M."/>
        </authorList>
    </citation>
    <scope>REVIEW</scope>
</reference>
<reference key="3">
    <citation type="journal article" date="1999" name="J. Mol. Biol.">
        <title>Structural biology of HIV.</title>
        <authorList>
            <person name="Turner B.G."/>
            <person name="Summers M.F."/>
        </authorList>
    </citation>
    <scope>REVIEW</scope>
</reference>
<reference key="4">
    <citation type="journal article" date="2001" name="Annu. Rev. Genet.">
        <title>Mechanisms of retroviral recombination.</title>
        <authorList>
            <person name="Negroni M."/>
            <person name="Buc H."/>
        </authorList>
    </citation>
    <scope>REVIEW</scope>
</reference>
<reference key="5">
    <citation type="journal article" date="2002" name="Genome Biol.">
        <title>Retroviral proteases.</title>
        <authorList>
            <person name="Dunn B.M."/>
            <person name="Goodenow M.M."/>
            <person name="Gustchina A."/>
            <person name="Wlodawer A."/>
        </authorList>
    </citation>
    <scope>REVIEW</scope>
</reference>
<reference key="6">
    <citation type="journal article" date="2003" name="Biochim. Biophys. Acta">
        <title>Role of HIV-1 Gag domains in viral assembly.</title>
        <authorList>
            <person name="Scarlata S."/>
            <person name="Carter C."/>
        </authorList>
    </citation>
    <scope>REVIEW</scope>
</reference>
<protein>
    <recommendedName>
        <fullName>Gag-Pol polyprotein</fullName>
    </recommendedName>
    <alternativeName>
        <fullName>Pr160Gag-Pol</fullName>
    </alternativeName>
    <component>
        <recommendedName>
            <fullName>Matrix protein p17</fullName>
            <shortName>MA</shortName>
        </recommendedName>
    </component>
    <component>
        <recommendedName>
            <fullName>Capsid protein p24</fullName>
            <shortName>CA</shortName>
        </recommendedName>
    </component>
    <component>
        <recommendedName>
            <fullName evidence="7">Spacer peptide 1</fullName>
            <shortName>SP1</shortName>
        </recommendedName>
        <alternativeName>
            <fullName>p2</fullName>
        </alternativeName>
    </component>
    <component>
        <recommendedName>
            <fullName>Nucleocapsid protein p7</fullName>
            <shortName>NC</shortName>
        </recommendedName>
    </component>
    <component>
        <recommendedName>
            <fullName>Transframe peptide</fullName>
            <shortName>TF</shortName>
        </recommendedName>
    </component>
    <component>
        <recommendedName>
            <fullName>p6-pol</fullName>
            <shortName>p6*</shortName>
        </recommendedName>
    </component>
    <component>
        <recommendedName>
            <fullName>Protease</fullName>
            <ecNumber>3.4.23.16</ecNumber>
        </recommendedName>
        <alternativeName>
            <fullName>PR</fullName>
        </alternativeName>
        <alternativeName>
            <fullName>Retropepsin</fullName>
        </alternativeName>
    </component>
    <component>
        <recommendedName>
            <fullName>Reverse transcriptase/ribonuclease H</fullName>
            <ecNumber>2.7.7.49</ecNumber>
            <ecNumber>2.7.7.7</ecNumber>
            <ecNumber>3.1.26.13</ecNumber>
        </recommendedName>
        <alternativeName>
            <fullName>Exoribonuclease H</fullName>
            <ecNumber>3.1.13.2</ecNumber>
        </alternativeName>
        <alternativeName>
            <fullName>p66 RT</fullName>
        </alternativeName>
    </component>
    <component>
        <recommendedName>
            <fullName>p51 RT</fullName>
        </recommendedName>
    </component>
    <component>
        <recommendedName>
            <fullName>p15</fullName>
        </recommendedName>
    </component>
    <component>
        <recommendedName>
            <fullName>Integrase</fullName>
            <shortName>IN</shortName>
            <ecNumber evidence="5">2.7.7.-</ecNumber>
            <ecNumber evidence="5">3.1.-.-</ecNumber>
        </recommendedName>
    </component>
</protein>
<accession>P18802</accession>
<dbReference type="EC" id="3.4.23.16"/>
<dbReference type="EC" id="2.7.7.49"/>
<dbReference type="EC" id="2.7.7.7"/>
<dbReference type="EC" id="3.1.26.13"/>
<dbReference type="EC" id="3.1.13.2"/>
<dbReference type="EC" id="2.7.7.-" evidence="5"/>
<dbReference type="EC" id="3.1.-.-" evidence="5"/>
<dbReference type="EMBL" id="M27323">
    <property type="protein sequence ID" value="AAA44869.1"/>
    <property type="status" value="ALT_SEQ"/>
    <property type="molecule type" value="Genomic_DNA"/>
</dbReference>
<dbReference type="PIR" id="JQ0067">
    <property type="entry name" value="GNLJND"/>
</dbReference>
<dbReference type="SMR" id="P18802"/>
<dbReference type="MEROPS" id="A02.001"/>
<dbReference type="PRO" id="PR:P18802"/>
<dbReference type="Proteomes" id="UP000172620">
    <property type="component" value="Segment"/>
</dbReference>
<dbReference type="GO" id="GO:0043657">
    <property type="term" value="C:host cell"/>
    <property type="evidence" value="ECO:0007669"/>
    <property type="project" value="GOC"/>
</dbReference>
<dbReference type="GO" id="GO:0042025">
    <property type="term" value="C:host cell nucleus"/>
    <property type="evidence" value="ECO:0007669"/>
    <property type="project" value="UniProtKB-SubCell"/>
</dbReference>
<dbReference type="GO" id="GO:0020002">
    <property type="term" value="C:host cell plasma membrane"/>
    <property type="evidence" value="ECO:0007669"/>
    <property type="project" value="UniProtKB-SubCell"/>
</dbReference>
<dbReference type="GO" id="GO:0072494">
    <property type="term" value="C:host multivesicular body"/>
    <property type="evidence" value="ECO:0007669"/>
    <property type="project" value="UniProtKB-SubCell"/>
</dbReference>
<dbReference type="GO" id="GO:0016020">
    <property type="term" value="C:membrane"/>
    <property type="evidence" value="ECO:0007669"/>
    <property type="project" value="UniProtKB-KW"/>
</dbReference>
<dbReference type="GO" id="GO:0019013">
    <property type="term" value="C:viral nucleocapsid"/>
    <property type="evidence" value="ECO:0007669"/>
    <property type="project" value="UniProtKB-KW"/>
</dbReference>
<dbReference type="GO" id="GO:0055036">
    <property type="term" value="C:virion membrane"/>
    <property type="evidence" value="ECO:0007669"/>
    <property type="project" value="UniProtKB-SubCell"/>
</dbReference>
<dbReference type="GO" id="GO:0004190">
    <property type="term" value="F:aspartic-type endopeptidase activity"/>
    <property type="evidence" value="ECO:0007669"/>
    <property type="project" value="UniProtKB-KW"/>
</dbReference>
<dbReference type="GO" id="GO:0003677">
    <property type="term" value="F:DNA binding"/>
    <property type="evidence" value="ECO:0007669"/>
    <property type="project" value="UniProtKB-KW"/>
</dbReference>
<dbReference type="GO" id="GO:0003887">
    <property type="term" value="F:DNA-directed DNA polymerase activity"/>
    <property type="evidence" value="ECO:0007669"/>
    <property type="project" value="UniProtKB-KW"/>
</dbReference>
<dbReference type="GO" id="GO:0004533">
    <property type="term" value="F:exoribonuclease H activity"/>
    <property type="evidence" value="ECO:0007669"/>
    <property type="project" value="UniProtKB-EC"/>
</dbReference>
<dbReference type="GO" id="GO:0008289">
    <property type="term" value="F:lipid binding"/>
    <property type="evidence" value="ECO:0007669"/>
    <property type="project" value="UniProtKB-KW"/>
</dbReference>
<dbReference type="GO" id="GO:0035613">
    <property type="term" value="F:RNA stem-loop binding"/>
    <property type="evidence" value="ECO:0007669"/>
    <property type="project" value="TreeGrafter"/>
</dbReference>
<dbReference type="GO" id="GO:0003964">
    <property type="term" value="F:RNA-directed DNA polymerase activity"/>
    <property type="evidence" value="ECO:0007669"/>
    <property type="project" value="UniProtKB-KW"/>
</dbReference>
<dbReference type="GO" id="GO:0004523">
    <property type="term" value="F:RNA-DNA hybrid ribonuclease activity"/>
    <property type="evidence" value="ECO:0007669"/>
    <property type="project" value="InterPro"/>
</dbReference>
<dbReference type="GO" id="GO:0005198">
    <property type="term" value="F:structural molecule activity"/>
    <property type="evidence" value="ECO:0007669"/>
    <property type="project" value="InterPro"/>
</dbReference>
<dbReference type="GO" id="GO:0008270">
    <property type="term" value="F:zinc ion binding"/>
    <property type="evidence" value="ECO:0007669"/>
    <property type="project" value="UniProtKB-KW"/>
</dbReference>
<dbReference type="GO" id="GO:0015074">
    <property type="term" value="P:DNA integration"/>
    <property type="evidence" value="ECO:0007669"/>
    <property type="project" value="UniProtKB-KW"/>
</dbReference>
<dbReference type="GO" id="GO:0006310">
    <property type="term" value="P:DNA recombination"/>
    <property type="evidence" value="ECO:0007669"/>
    <property type="project" value="UniProtKB-KW"/>
</dbReference>
<dbReference type="GO" id="GO:0075713">
    <property type="term" value="P:establishment of integrated proviral latency"/>
    <property type="evidence" value="ECO:0007669"/>
    <property type="project" value="UniProtKB-KW"/>
</dbReference>
<dbReference type="GO" id="GO:0006508">
    <property type="term" value="P:proteolysis"/>
    <property type="evidence" value="ECO:0007669"/>
    <property type="project" value="UniProtKB-KW"/>
</dbReference>
<dbReference type="GO" id="GO:0046718">
    <property type="term" value="P:symbiont entry into host cell"/>
    <property type="evidence" value="ECO:0007669"/>
    <property type="project" value="UniProtKB-KW"/>
</dbReference>
<dbReference type="GO" id="GO:0052151">
    <property type="term" value="P:symbiont-mediated activation of host apoptosis"/>
    <property type="evidence" value="ECO:0007669"/>
    <property type="project" value="UniProtKB-KW"/>
</dbReference>
<dbReference type="GO" id="GO:0039657">
    <property type="term" value="P:symbiont-mediated suppression of host gene expression"/>
    <property type="evidence" value="ECO:0007669"/>
    <property type="project" value="UniProtKB-KW"/>
</dbReference>
<dbReference type="GO" id="GO:0044826">
    <property type="term" value="P:viral genome integration into host DNA"/>
    <property type="evidence" value="ECO:0007669"/>
    <property type="project" value="UniProtKB-KW"/>
</dbReference>
<dbReference type="GO" id="GO:0075732">
    <property type="term" value="P:viral penetration into host nucleus"/>
    <property type="evidence" value="ECO:0007669"/>
    <property type="project" value="UniProtKB-KW"/>
</dbReference>
<dbReference type="GO" id="GO:0075523">
    <property type="term" value="P:viral translational frameshifting"/>
    <property type="evidence" value="ECO:0007669"/>
    <property type="project" value="UniProtKB-KW"/>
</dbReference>
<dbReference type="CDD" id="cd05482">
    <property type="entry name" value="HIV_retropepsin_like"/>
    <property type="match status" value="1"/>
</dbReference>
<dbReference type="CDD" id="cd01645">
    <property type="entry name" value="RT_Rtv"/>
    <property type="match status" value="1"/>
</dbReference>
<dbReference type="FunFam" id="1.10.1200.30:FF:000001">
    <property type="entry name" value="Gag polyprotein"/>
    <property type="match status" value="1"/>
</dbReference>
<dbReference type="FunFam" id="1.10.375.10:FF:000001">
    <property type="entry name" value="Gag polyprotein"/>
    <property type="match status" value="1"/>
</dbReference>
<dbReference type="FunFam" id="4.10.60.10:FF:000001">
    <property type="entry name" value="Gag polyprotein"/>
    <property type="match status" value="1"/>
</dbReference>
<dbReference type="FunFam" id="2.40.70.10:FF:000001">
    <property type="entry name" value="Gag-Pol polyprotein"/>
    <property type="match status" value="1"/>
</dbReference>
<dbReference type="FunFam" id="3.30.420.10:FF:000025">
    <property type="entry name" value="Gag-Pol polyprotein"/>
    <property type="match status" value="1"/>
</dbReference>
<dbReference type="FunFam" id="3.30.420.10:FF:000017">
    <property type="entry name" value="POL polyprotein"/>
    <property type="match status" value="1"/>
</dbReference>
<dbReference type="FunFam" id="3.30.70.270:FF:000016">
    <property type="entry name" value="POL polyprotein"/>
    <property type="match status" value="1"/>
</dbReference>
<dbReference type="Gene3D" id="1.10.10.200">
    <property type="match status" value="1"/>
</dbReference>
<dbReference type="Gene3D" id="1.10.1200.30">
    <property type="match status" value="1"/>
</dbReference>
<dbReference type="Gene3D" id="3.30.70.270">
    <property type="match status" value="3"/>
</dbReference>
<dbReference type="Gene3D" id="2.40.70.10">
    <property type="entry name" value="Acid Proteases"/>
    <property type="match status" value="1"/>
</dbReference>
<dbReference type="Gene3D" id="3.10.10.10">
    <property type="entry name" value="HIV Type 1 Reverse Transcriptase, subunit A, domain 1"/>
    <property type="match status" value="1"/>
</dbReference>
<dbReference type="Gene3D" id="1.10.375.10">
    <property type="entry name" value="Human Immunodeficiency Virus Type 1 Capsid Protein"/>
    <property type="match status" value="1"/>
</dbReference>
<dbReference type="Gene3D" id="1.10.150.90">
    <property type="entry name" value="Immunodeficiency lentiviruses, gag gene matrix protein p17"/>
    <property type="match status" value="1"/>
</dbReference>
<dbReference type="Gene3D" id="2.30.30.10">
    <property type="entry name" value="Integrase, C-terminal domain superfamily, retroviral"/>
    <property type="match status" value="1"/>
</dbReference>
<dbReference type="Gene3D" id="3.30.420.10">
    <property type="entry name" value="Ribonuclease H-like superfamily/Ribonuclease H"/>
    <property type="match status" value="2"/>
</dbReference>
<dbReference type="Gene3D" id="1.20.5.760">
    <property type="entry name" value="Single helix bin"/>
    <property type="match status" value="1"/>
</dbReference>
<dbReference type="Gene3D" id="4.10.60.10">
    <property type="entry name" value="Zinc finger, CCHC-type"/>
    <property type="match status" value="1"/>
</dbReference>
<dbReference type="InterPro" id="IPR001969">
    <property type="entry name" value="Aspartic_peptidase_AS"/>
</dbReference>
<dbReference type="InterPro" id="IPR043502">
    <property type="entry name" value="DNA/RNA_pol_sf"/>
</dbReference>
<dbReference type="InterPro" id="IPR045345">
    <property type="entry name" value="Gag_p24_C"/>
</dbReference>
<dbReference type="InterPro" id="IPR017856">
    <property type="entry name" value="Integrase-like_N"/>
</dbReference>
<dbReference type="InterPro" id="IPR036862">
    <property type="entry name" value="Integrase_C_dom_sf_retrovir"/>
</dbReference>
<dbReference type="InterPro" id="IPR001037">
    <property type="entry name" value="Integrase_C_retrovir"/>
</dbReference>
<dbReference type="InterPro" id="IPR001584">
    <property type="entry name" value="Integrase_cat-core"/>
</dbReference>
<dbReference type="InterPro" id="IPR003308">
    <property type="entry name" value="Integrase_Zn-bd_dom_N"/>
</dbReference>
<dbReference type="InterPro" id="IPR000071">
    <property type="entry name" value="Lentvrl_matrix_N"/>
</dbReference>
<dbReference type="InterPro" id="IPR012344">
    <property type="entry name" value="Matrix_HIV/RSV_N"/>
</dbReference>
<dbReference type="InterPro" id="IPR001995">
    <property type="entry name" value="Peptidase_A2_cat"/>
</dbReference>
<dbReference type="InterPro" id="IPR021109">
    <property type="entry name" value="Peptidase_aspartic_dom_sf"/>
</dbReference>
<dbReference type="InterPro" id="IPR034170">
    <property type="entry name" value="Retropepsin-like_cat_dom"/>
</dbReference>
<dbReference type="InterPro" id="IPR018061">
    <property type="entry name" value="Retropepsins"/>
</dbReference>
<dbReference type="InterPro" id="IPR008916">
    <property type="entry name" value="Retrov_capsid_C"/>
</dbReference>
<dbReference type="InterPro" id="IPR008919">
    <property type="entry name" value="Retrov_capsid_N"/>
</dbReference>
<dbReference type="InterPro" id="IPR010999">
    <property type="entry name" value="Retrovr_matrix"/>
</dbReference>
<dbReference type="InterPro" id="IPR043128">
    <property type="entry name" value="Rev_trsase/Diguanyl_cyclase"/>
</dbReference>
<dbReference type="InterPro" id="IPR012337">
    <property type="entry name" value="RNaseH-like_sf"/>
</dbReference>
<dbReference type="InterPro" id="IPR002156">
    <property type="entry name" value="RNaseH_domain"/>
</dbReference>
<dbReference type="InterPro" id="IPR036397">
    <property type="entry name" value="RNaseH_sf"/>
</dbReference>
<dbReference type="InterPro" id="IPR000477">
    <property type="entry name" value="RT_dom"/>
</dbReference>
<dbReference type="InterPro" id="IPR010659">
    <property type="entry name" value="RVT_connect"/>
</dbReference>
<dbReference type="InterPro" id="IPR010661">
    <property type="entry name" value="RVT_thumb"/>
</dbReference>
<dbReference type="InterPro" id="IPR001878">
    <property type="entry name" value="Znf_CCHC"/>
</dbReference>
<dbReference type="InterPro" id="IPR036875">
    <property type="entry name" value="Znf_CCHC_sf"/>
</dbReference>
<dbReference type="PANTHER" id="PTHR41694">
    <property type="entry name" value="ENDOGENOUS RETROVIRUS GROUP K MEMBER POL PROTEIN"/>
    <property type="match status" value="1"/>
</dbReference>
<dbReference type="PANTHER" id="PTHR41694:SF3">
    <property type="entry name" value="RNA-DIRECTED DNA POLYMERASE-RELATED"/>
    <property type="match status" value="1"/>
</dbReference>
<dbReference type="Pfam" id="PF00540">
    <property type="entry name" value="Gag_p17"/>
    <property type="match status" value="1"/>
</dbReference>
<dbReference type="Pfam" id="PF19317">
    <property type="entry name" value="Gag_p24_C"/>
    <property type="match status" value="1"/>
</dbReference>
<dbReference type="Pfam" id="PF00552">
    <property type="entry name" value="IN_DBD_C"/>
    <property type="match status" value="1"/>
</dbReference>
<dbReference type="Pfam" id="PF02022">
    <property type="entry name" value="Integrase_Zn"/>
    <property type="match status" value="1"/>
</dbReference>
<dbReference type="Pfam" id="PF00075">
    <property type="entry name" value="RNase_H"/>
    <property type="match status" value="1"/>
</dbReference>
<dbReference type="Pfam" id="PF00665">
    <property type="entry name" value="rve"/>
    <property type="match status" value="1"/>
</dbReference>
<dbReference type="Pfam" id="PF00077">
    <property type="entry name" value="RVP"/>
    <property type="match status" value="1"/>
</dbReference>
<dbReference type="Pfam" id="PF00078">
    <property type="entry name" value="RVT_1"/>
    <property type="match status" value="1"/>
</dbReference>
<dbReference type="Pfam" id="PF06815">
    <property type="entry name" value="RVT_connect"/>
    <property type="match status" value="1"/>
</dbReference>
<dbReference type="Pfam" id="PF06817">
    <property type="entry name" value="RVT_thumb"/>
    <property type="match status" value="1"/>
</dbReference>
<dbReference type="Pfam" id="PF00098">
    <property type="entry name" value="zf-CCHC"/>
    <property type="match status" value="2"/>
</dbReference>
<dbReference type="PRINTS" id="PR00234">
    <property type="entry name" value="HIV1MATRIX"/>
</dbReference>
<dbReference type="SMART" id="SM00343">
    <property type="entry name" value="ZnF_C2HC"/>
    <property type="match status" value="2"/>
</dbReference>
<dbReference type="SUPFAM" id="SSF50630">
    <property type="entry name" value="Acid proteases"/>
    <property type="match status" value="1"/>
</dbReference>
<dbReference type="SUPFAM" id="SSF50122">
    <property type="entry name" value="DNA-binding domain of retroviral integrase"/>
    <property type="match status" value="1"/>
</dbReference>
<dbReference type="SUPFAM" id="SSF56672">
    <property type="entry name" value="DNA/RNA polymerases"/>
    <property type="match status" value="1"/>
</dbReference>
<dbReference type="SUPFAM" id="SSF46919">
    <property type="entry name" value="N-terminal Zn binding domain of HIV integrase"/>
    <property type="match status" value="1"/>
</dbReference>
<dbReference type="SUPFAM" id="SSF47836">
    <property type="entry name" value="Retroviral matrix proteins"/>
    <property type="match status" value="1"/>
</dbReference>
<dbReference type="SUPFAM" id="SSF47353">
    <property type="entry name" value="Retrovirus capsid dimerization domain-like"/>
    <property type="match status" value="1"/>
</dbReference>
<dbReference type="SUPFAM" id="SSF47943">
    <property type="entry name" value="Retrovirus capsid protein, N-terminal core domain"/>
    <property type="match status" value="1"/>
</dbReference>
<dbReference type="SUPFAM" id="SSF57756">
    <property type="entry name" value="Retrovirus zinc finger-like domains"/>
    <property type="match status" value="1"/>
</dbReference>
<dbReference type="SUPFAM" id="SSF53098">
    <property type="entry name" value="Ribonuclease H-like"/>
    <property type="match status" value="2"/>
</dbReference>
<dbReference type="PROSITE" id="PS50175">
    <property type="entry name" value="ASP_PROT_RETROV"/>
    <property type="match status" value="1"/>
</dbReference>
<dbReference type="PROSITE" id="PS00141">
    <property type="entry name" value="ASP_PROTEASE"/>
    <property type="match status" value="1"/>
</dbReference>
<dbReference type="PROSITE" id="PS50994">
    <property type="entry name" value="INTEGRASE"/>
    <property type="match status" value="1"/>
</dbReference>
<dbReference type="PROSITE" id="PS51027">
    <property type="entry name" value="INTEGRASE_DBD"/>
    <property type="match status" value="1"/>
</dbReference>
<dbReference type="PROSITE" id="PS50879">
    <property type="entry name" value="RNASE_H_1"/>
    <property type="match status" value="1"/>
</dbReference>
<dbReference type="PROSITE" id="PS50878">
    <property type="entry name" value="RT_POL"/>
    <property type="match status" value="1"/>
</dbReference>
<dbReference type="PROSITE" id="PS50158">
    <property type="entry name" value="ZF_CCHC"/>
    <property type="match status" value="2"/>
</dbReference>
<dbReference type="PROSITE" id="PS50876">
    <property type="entry name" value="ZF_INTEGRASE"/>
    <property type="match status" value="1"/>
</dbReference>
<organism>
    <name type="scientific">Human immunodeficiency virus type 1 group M subtype D (isolate NDK)</name>
    <name type="common">HIV-1</name>
    <dbReference type="NCBI Taxonomy" id="11695"/>
    <lineage>
        <taxon>Viruses</taxon>
        <taxon>Riboviria</taxon>
        <taxon>Pararnavirae</taxon>
        <taxon>Artverviricota</taxon>
        <taxon>Revtraviricetes</taxon>
        <taxon>Ortervirales</taxon>
        <taxon>Retroviridae</taxon>
        <taxon>Orthoretrovirinae</taxon>
        <taxon>Lentivirus</taxon>
        <taxon>Human immunodeficiency virus type 1</taxon>
    </lineage>
</organism>
<sequence length="1432" mass="161441">MGARASVLSGGKLDTWERIRLRPGGKKKYALKHLIWASRELERFTLNPGLLETSEGCKQIIGQLQPSIQTGSEEIRSLYNTVATLYCVHERIEVKDTKEAVEKMEEEQNKSKKKTQQAAADSSQVSQNYPIVQNLQGQMVHQAISPRTLNAWVKVIEEKAFSPEVIPMFSALSEGATPQDLNTMLNTVGGHQAAMQMLKETINDEAAEWDRLHPVHAGPVAPGQMREPRGSDIAGTTSTLQEQIAWMTSNPPIPVGEIYKRWIILGLNKIVRMYSPVSILDIRQGPKEPFRDYVDRFYKTLRAEQASQDVKNWMTETLLVQNANPDCKTILKALGPQATLEEMMTACQGVGGPGHKARVLAEAMSQVTGSATAVMMQRGNFKGPRKSIKCFNCGKEGHTAKNCRAPRKKGCWKCGREGHQMKDCTERQANFLREDLAFPQGKAGEFSSEQTRANSPTSRELRVWGGDNPLSETGAERQGTVSFSFPQITLWQRPLVTIKIGGQLKEALLDTGADDTVLEEINLPGKWKPKMIGGIGGFIKVRQYDQILIEICGYKAMGTVLVGPTPVNIIGRNLLTQIGCTLNFPISPIETVPVKLKPGMDGPKVKQWPLTEEKIKALTEICTEMEKEGKISRIGPENPYNTPIFAIKKKDSTKWRKLVDFRELNKRTQDFWEVQLGIPHPAGLKKKKSVTVLDVGDAYFSVPLDEDFRKYTAFTIPSINNETPGIRYQYNVLPQGWKGSPAIFQSSMTKILEPFRKQNPEIVIYQYMDDLYVGSDLEIGQHRTKIEELREHLLRWGFTTPDKKHQKEPPFLWMGYELHPDKWTVQPINLPEKESWTVNDIQKLVGKLNWASQIYAGIKVKQLCKLLRGTKALTEVVPLTEEAELELAENREILKEPVHGVYYDPSKDLIAELQKQGDGQWTYQIYQEPFKNLKTGKYARTRGAHTNDVKQLTEAVQKIATESIVIWGKTPKFKLPIQKETWETWWIEYWQATWIPEWEFVNTPPLVKLWYQLEKEPIIGAETFYVDGAANRETKLGKAGYVTDRGRQKVVPFTDTTNQKTELQAINLALQDSGLEVNIVTDSQYALGIIQAQPDKSESELVSQIIEQLIKKEKVYLAWVPAHKGIGGNEQVDKLVSQGIRKVLFLDGIDKAQEEHEKYHNNWRAMASDFNLPPVVAKEIVASCDKCQLKGEAMHGQVDCSPGIWQLDCTHLEGKVILVAVHVASGYIEAEVIPAETGQETAYFLLKLAGRWPVKVVHTDNGSNFTSATVKAACWWAGIKQEFGIPYNPQSQGVVESMNKELKKIIGQVRDQAEHLKTAVQMAVFIHNFKRKGGIGGYSAGERIIDIIATDIQTRELQKQIIKIQNFRVYYRDSRDPIWKGPAKLLWKGEGAVVIQDNSDIKVVPRRKVKIIRDYGKQMAGDDCVASRQDED</sequence>
<keyword id="KW-1073">Activation of host caspases by virus</keyword>
<keyword id="KW-0014">AIDS</keyword>
<keyword id="KW-0064">Aspartyl protease</keyword>
<keyword id="KW-0167">Capsid protein</keyword>
<keyword id="KW-0229">DNA integration</keyword>
<keyword id="KW-0233">DNA recombination</keyword>
<keyword id="KW-0238">DNA-binding</keyword>
<keyword id="KW-0239">DNA-directed DNA polymerase</keyword>
<keyword id="KW-0255">Endonuclease</keyword>
<keyword id="KW-1262">Eukaryotic host gene expression shutoff by virus</keyword>
<keyword id="KW-1193">Eukaryotic host translation shutoff by virus</keyword>
<keyword id="KW-1032">Host cell membrane</keyword>
<keyword id="KW-1035">Host cytoplasm</keyword>
<keyword id="KW-1039">Host endosome</keyword>
<keyword id="KW-1190">Host gene expression shutoff by virus</keyword>
<keyword id="KW-1043">Host membrane</keyword>
<keyword id="KW-1048">Host nucleus</keyword>
<keyword id="KW-0945">Host-virus interaction</keyword>
<keyword id="KW-0378">Hydrolase</keyword>
<keyword id="KW-0446">Lipid-binding</keyword>
<keyword id="KW-0449">Lipoprotein</keyword>
<keyword id="KW-0460">Magnesium</keyword>
<keyword id="KW-0472">Membrane</keyword>
<keyword id="KW-0479">Metal-binding</keyword>
<keyword id="KW-1119">Modulation of host cell apoptosis by virus</keyword>
<keyword id="KW-0511">Multifunctional enzyme</keyword>
<keyword id="KW-0519">Myristate</keyword>
<keyword id="KW-0540">Nuclease</keyword>
<keyword id="KW-0548">Nucleotidyltransferase</keyword>
<keyword id="KW-0597">Phosphoprotein</keyword>
<keyword id="KW-0645">Protease</keyword>
<keyword id="KW-0677">Repeat</keyword>
<keyword id="KW-0688">Ribosomal frameshifting</keyword>
<keyword id="KW-0694">RNA-binding</keyword>
<keyword id="KW-0695">RNA-directed DNA polymerase</keyword>
<keyword id="KW-0808">Transferase</keyword>
<keyword id="KW-1179">Viral genome integration</keyword>
<keyword id="KW-0543">Viral nucleoprotein</keyword>
<keyword id="KW-1163">Viral penetration into host nucleus</keyword>
<keyword id="KW-1188">Viral release from host cell</keyword>
<keyword id="KW-0946">Virion</keyword>
<keyword id="KW-0917">Virion maturation</keyword>
<keyword id="KW-1160">Virus entry into host cell</keyword>
<keyword id="KW-0862">Zinc</keyword>
<keyword id="KW-0863">Zinc-finger</keyword>
<name>POL_HV1ND</name>
<feature type="initiator methionine" description="Removed; by host" evidence="1">
    <location>
        <position position="1"/>
    </location>
</feature>
<feature type="chain" id="PRO_0000261275" description="Gag-Pol polyprotein">
    <location>
        <begin position="2"/>
        <end position="1432"/>
    </location>
</feature>
<feature type="chain" id="PRO_0000042367" description="Matrix protein p17" evidence="1">
    <location>
        <begin position="2"/>
        <end position="129"/>
    </location>
</feature>
<feature type="chain" id="PRO_0000042368" description="Capsid protein p24" evidence="1">
    <location>
        <begin position="130"/>
        <end position="360"/>
    </location>
</feature>
<feature type="peptide" id="PRO_0000042369" description="Spacer peptide 1" evidence="1">
    <location>
        <begin position="361"/>
        <end position="374"/>
    </location>
</feature>
<feature type="chain" id="PRO_0000042370" description="Nucleocapsid protein p7" evidence="1">
    <location>
        <begin position="375"/>
        <end position="430"/>
    </location>
</feature>
<feature type="peptide" id="PRO_0000246724" description="Transframe peptide" evidence="8">
    <location>
        <begin position="431"/>
        <end position="438"/>
    </location>
</feature>
<feature type="chain" id="PRO_0000042371" description="p6-pol" evidence="8">
    <location>
        <begin position="439"/>
        <end position="485"/>
    </location>
</feature>
<feature type="chain" id="PRO_0000038657" description="Protease" evidence="1">
    <location>
        <begin position="486"/>
        <end position="584"/>
    </location>
</feature>
<feature type="chain" id="PRO_0000042372" description="Reverse transcriptase/ribonuclease H" evidence="1">
    <location>
        <begin position="585"/>
        <end position="1144"/>
    </location>
</feature>
<feature type="chain" id="PRO_0000042373" description="p51 RT" evidence="1">
    <location>
        <begin position="585"/>
        <end position="1024"/>
    </location>
</feature>
<feature type="chain" id="PRO_0000042374" description="p15" evidence="1">
    <location>
        <begin position="1025"/>
        <end position="1144"/>
    </location>
</feature>
<feature type="chain" id="PRO_0000042375" description="Integrase" evidence="1">
    <location>
        <begin position="1145"/>
        <end position="1432"/>
    </location>
</feature>
<feature type="domain" description="Peptidase A2" evidence="10">
    <location>
        <begin position="505"/>
        <end position="574"/>
    </location>
</feature>
<feature type="domain" description="Reverse transcriptase" evidence="11">
    <location>
        <begin position="628"/>
        <end position="818"/>
    </location>
</feature>
<feature type="domain" description="RNase H type-1" evidence="12">
    <location>
        <begin position="1018"/>
        <end position="1141"/>
    </location>
</feature>
<feature type="domain" description="Integrase catalytic" evidence="14">
    <location>
        <begin position="1198"/>
        <end position="1348"/>
    </location>
</feature>
<feature type="zinc finger region" description="CCHC-type 1" evidence="9">
    <location>
        <begin position="388"/>
        <end position="405"/>
    </location>
</feature>
<feature type="zinc finger region" description="CCHC-type 2" evidence="9">
    <location>
        <begin position="409"/>
        <end position="426"/>
    </location>
</feature>
<feature type="zinc finger region" description="Integrase-type" evidence="13">
    <location>
        <begin position="1147"/>
        <end position="1188"/>
    </location>
</feature>
<feature type="DNA-binding region" description="Integrase-type" evidence="15">
    <location>
        <begin position="1367"/>
        <end position="1414"/>
    </location>
</feature>
<feature type="region of interest" description="Interaction with Gp41" evidence="7">
    <location>
        <begin position="7"/>
        <end position="31"/>
    </location>
</feature>
<feature type="region of interest" description="Interaction with host CALM1" evidence="5">
    <location>
        <begin position="8"/>
        <end position="43"/>
    </location>
</feature>
<feature type="region of interest" description="Interaction with host AP3D1" evidence="7">
    <location>
        <begin position="12"/>
        <end position="19"/>
    </location>
</feature>
<feature type="region of interest" description="Interaction with membrane phosphatidylinositol 4,5-bisphosphate and RNA" evidence="7">
    <location>
        <begin position="14"/>
        <end position="33"/>
    </location>
</feature>
<feature type="region of interest" description="Interaction with membrane phosphatidylinositol 4,5-bisphosphate" evidence="7">
    <location>
        <begin position="73"/>
        <end position="77"/>
    </location>
</feature>
<feature type="region of interest" description="Disordered" evidence="17">
    <location>
        <begin position="102"/>
        <end position="125"/>
    </location>
</feature>
<feature type="region of interest" description="Interaction with human PPIA/CYPA and NUP153" evidence="7">
    <location>
        <begin position="186"/>
        <end position="224"/>
    </location>
</feature>
<feature type="region of interest" description="Dimerization/Multimerization of capsid protein p24" evidence="5">
    <location>
        <begin position="274"/>
        <end position="360"/>
    </location>
</feature>
<feature type="region of interest" description="Dimerization of protease" evidence="5">
    <location>
        <begin position="486"/>
        <end position="490"/>
    </location>
</feature>
<feature type="region of interest" description="Dimerization of protease" evidence="5">
    <location>
        <begin position="534"/>
        <end position="540"/>
    </location>
</feature>
<feature type="region of interest" description="Dimerization of protease" evidence="5">
    <location>
        <begin position="573"/>
        <end position="585"/>
    </location>
</feature>
<feature type="region of interest" description="RT 'primer grip'" evidence="1">
    <location>
        <begin position="811"/>
        <end position="819"/>
    </location>
</feature>
<feature type="short sequence motif" description="Nuclear export signal" evidence="1">
    <location>
        <begin position="16"/>
        <end position="22"/>
    </location>
</feature>
<feature type="short sequence motif" description="Nuclear localization signal" evidence="1">
    <location>
        <begin position="26"/>
        <end position="32"/>
    </location>
</feature>
<feature type="short sequence motif" description="Tryptophan repeat motif" evidence="1">
    <location>
        <begin position="982"/>
        <end position="998"/>
    </location>
</feature>
<feature type="compositionally biased region" description="Low complexity" evidence="17">
    <location>
        <begin position="116"/>
        <end position="125"/>
    </location>
</feature>
<feature type="active site" description="For protease activity; shared with dimeric partner" evidence="16">
    <location>
        <position position="510"/>
    </location>
</feature>
<feature type="binding site" evidence="1">
    <location>
        <position position="694"/>
    </location>
    <ligand>
        <name>Mg(2+)</name>
        <dbReference type="ChEBI" id="CHEBI:18420"/>
        <label>1</label>
        <note>catalytic; for reverse transcriptase activity</note>
    </ligand>
</feature>
<feature type="binding site" evidence="1">
    <location>
        <position position="769"/>
    </location>
    <ligand>
        <name>Mg(2+)</name>
        <dbReference type="ChEBI" id="CHEBI:18420"/>
        <label>1</label>
        <note>catalytic; for reverse transcriptase activity</note>
    </ligand>
</feature>
<feature type="binding site" evidence="1">
    <location>
        <position position="770"/>
    </location>
    <ligand>
        <name>Mg(2+)</name>
        <dbReference type="ChEBI" id="CHEBI:18420"/>
        <label>1</label>
        <note>catalytic; for reverse transcriptase activity</note>
    </ligand>
</feature>
<feature type="binding site" evidence="1">
    <location>
        <position position="1027"/>
    </location>
    <ligand>
        <name>Mg(2+)</name>
        <dbReference type="ChEBI" id="CHEBI:18420"/>
        <label>2</label>
        <note>catalytic; for RNase H activity</note>
    </ligand>
</feature>
<feature type="binding site" evidence="1">
    <location>
        <position position="1062"/>
    </location>
    <ligand>
        <name>Mg(2+)</name>
        <dbReference type="ChEBI" id="CHEBI:18420"/>
        <label>2</label>
        <note>catalytic; for RNase H activity</note>
    </ligand>
</feature>
<feature type="binding site" evidence="1">
    <location>
        <position position="1082"/>
    </location>
    <ligand>
        <name>Mg(2+)</name>
        <dbReference type="ChEBI" id="CHEBI:18420"/>
        <label>2</label>
        <note>catalytic; for RNase H activity</note>
    </ligand>
</feature>
<feature type="binding site" evidence="1">
    <location>
        <position position="1133"/>
    </location>
    <ligand>
        <name>Mg(2+)</name>
        <dbReference type="ChEBI" id="CHEBI:18420"/>
        <label>2</label>
        <note>catalytic; for RNase H activity</note>
    </ligand>
</feature>
<feature type="binding site" evidence="13">
    <location>
        <position position="1156"/>
    </location>
    <ligand>
        <name>Zn(2+)</name>
        <dbReference type="ChEBI" id="CHEBI:29105"/>
    </ligand>
</feature>
<feature type="binding site" evidence="13">
    <location>
        <position position="1160"/>
    </location>
    <ligand>
        <name>Zn(2+)</name>
        <dbReference type="ChEBI" id="CHEBI:29105"/>
    </ligand>
</feature>
<feature type="binding site" evidence="13">
    <location>
        <position position="1184"/>
    </location>
    <ligand>
        <name>Zn(2+)</name>
        <dbReference type="ChEBI" id="CHEBI:29105"/>
    </ligand>
</feature>
<feature type="binding site" evidence="13">
    <location>
        <position position="1187"/>
    </location>
    <ligand>
        <name>Zn(2+)</name>
        <dbReference type="ChEBI" id="CHEBI:29105"/>
    </ligand>
</feature>
<feature type="binding site" evidence="1">
    <location>
        <position position="1208"/>
    </location>
    <ligand>
        <name>Mg(2+)</name>
        <dbReference type="ChEBI" id="CHEBI:18420"/>
        <label>3</label>
        <note>catalytic; for integrase activity</note>
    </ligand>
</feature>
<feature type="binding site" evidence="1">
    <location>
        <position position="1260"/>
    </location>
    <ligand>
        <name>Mg(2+)</name>
        <dbReference type="ChEBI" id="CHEBI:18420"/>
        <label>3</label>
        <note>catalytic; for integrase activity</note>
    </ligand>
</feature>
<feature type="binding site" evidence="5">
    <location>
        <position position="1296"/>
    </location>
    <ligand>
        <name>Mg(2+)</name>
        <dbReference type="ChEBI" id="CHEBI:18420"/>
        <label>3</label>
        <note>catalytic; for integrase activity</note>
    </ligand>
</feature>
<feature type="site" description="Cleavage; by viral protease" evidence="1">
    <location>
        <begin position="129"/>
        <end position="130"/>
    </location>
</feature>
<feature type="site" description="Cis/trans isomerization of proline peptide bond; by human PPIA/CYPA" evidence="1">
    <location>
        <begin position="218"/>
        <end position="219"/>
    </location>
</feature>
<feature type="site" description="Cleavage; by viral protease" evidence="1">
    <location>
        <begin position="360"/>
        <end position="361"/>
    </location>
</feature>
<feature type="site" description="Cleavage; by viral protease" evidence="1">
    <location>
        <begin position="374"/>
        <end position="375"/>
    </location>
</feature>
<feature type="site" description="Cleavage; by viral protease" evidence="8">
    <location>
        <begin position="430"/>
        <end position="431"/>
    </location>
</feature>
<feature type="site" description="Cleavage; by viral protease" evidence="1">
    <location>
        <begin position="438"/>
        <end position="439"/>
    </location>
</feature>
<feature type="site" description="Cleavage; by viral protease" evidence="1">
    <location>
        <begin position="485"/>
        <end position="486"/>
    </location>
</feature>
<feature type="site" description="Cleavage; by viral protease" evidence="1">
    <location>
        <begin position="584"/>
        <end position="585"/>
    </location>
</feature>
<feature type="site" description="Essential for RT p66/p51 heterodimerization" evidence="1">
    <location>
        <position position="985"/>
    </location>
</feature>
<feature type="site" description="Essential for RT p66/p51 heterodimerization" evidence="1">
    <location>
        <position position="998"/>
    </location>
</feature>
<feature type="site" description="Cleavage; by viral protease; partial" evidence="1">
    <location>
        <begin position="1024"/>
        <end position="1025"/>
    </location>
</feature>
<feature type="site" description="Cleavage; by viral protease" evidence="1">
    <location>
        <begin position="1144"/>
        <end position="1145"/>
    </location>
</feature>
<feature type="modified residue" description="Phosphotyrosine; by host" evidence="1">
    <location>
        <position position="129"/>
    </location>
</feature>
<feature type="lipid moiety-binding region" description="N-myristoyl glycine; by host" evidence="1">
    <location>
        <position position="2"/>
    </location>
</feature>
<proteinExistence type="inferred from homology"/>
<gene>
    <name type="primary">gag-pol</name>
</gene>